<proteinExistence type="inferred from homology"/>
<protein>
    <recommendedName>
        <fullName evidence="1">Flagellar brake protein YcgR</fullName>
    </recommendedName>
    <alternativeName>
        <fullName evidence="1">Cyclic di-GMP binding protein YcgR</fullName>
    </alternativeName>
</protein>
<accession>A2SJS7</accession>
<name>YCGR_METPP</name>
<evidence type="ECO:0000255" key="1">
    <source>
        <dbReference type="HAMAP-Rule" id="MF_01457"/>
    </source>
</evidence>
<comment type="function">
    <text evidence="1">Acts as a flagellar brake, regulating swimming and swarming in a bis-(3'-5') cyclic diguanylic acid (c-di-GMP)-dependent manner. Binds 1 c-di-GMP dimer per subunit. Increasing levels of c-di-GMP lead to decreased motility.</text>
</comment>
<comment type="subunit">
    <text evidence="1">Monomer. Interacts with the flagellar basal bodies.</text>
</comment>
<comment type="subcellular location">
    <subcellularLocation>
        <location evidence="1">Bacterial flagellum basal body</location>
    </subcellularLocation>
</comment>
<comment type="similarity">
    <text evidence="1">Belongs to the YcgR family.</text>
</comment>
<reference key="1">
    <citation type="journal article" date="2007" name="J. Bacteriol.">
        <title>Whole-genome analysis of the methyl tert-butyl ether-degrading beta-proteobacterium Methylibium petroleiphilum PM1.</title>
        <authorList>
            <person name="Kane S.R."/>
            <person name="Chakicherla A.Y."/>
            <person name="Chain P.S.G."/>
            <person name="Schmidt R."/>
            <person name="Shin M.W."/>
            <person name="Legler T.C."/>
            <person name="Scow K.M."/>
            <person name="Larimer F.W."/>
            <person name="Lucas S.M."/>
            <person name="Richardson P.M."/>
            <person name="Hristova K.R."/>
        </authorList>
    </citation>
    <scope>NUCLEOTIDE SEQUENCE [LARGE SCALE GENOMIC DNA]</scope>
    <source>
        <strain>ATCC BAA-1232 / LMG 22953 / PM1</strain>
    </source>
</reference>
<gene>
    <name evidence="1" type="primary">ycgR</name>
    <name type="ordered locus">Mpe_A2862</name>
</gene>
<keyword id="KW-0975">Bacterial flagellum</keyword>
<keyword id="KW-0973">c-di-GMP</keyword>
<keyword id="KW-0547">Nucleotide-binding</keyword>
<keyword id="KW-1185">Reference proteome</keyword>
<organism>
    <name type="scientific">Methylibium petroleiphilum (strain ATCC BAA-1232 / LMG 22953 / PM1)</name>
    <dbReference type="NCBI Taxonomy" id="420662"/>
    <lineage>
        <taxon>Bacteria</taxon>
        <taxon>Pseudomonadati</taxon>
        <taxon>Pseudomonadota</taxon>
        <taxon>Betaproteobacteria</taxon>
        <taxon>Burkholderiales</taxon>
        <taxon>Sphaerotilaceae</taxon>
        <taxon>Methylibium</taxon>
    </lineage>
</organism>
<feature type="chain" id="PRO_0000395277" description="Flagellar brake protein YcgR">
    <location>
        <begin position="1"/>
        <end position="229"/>
    </location>
</feature>
<feature type="domain" description="PilZ" evidence="1">
    <location>
        <begin position="134"/>
        <end position="218"/>
    </location>
</feature>
<sequence>MSAPAEVFSLLKQCADGNVLLSLSSPEGAAYTTTVWALDPARGLLCLSADGGDIKLQRLLESEEVVAVGYLDSVKLQFDLHDLVLVHSGRASALNARFPRELYRFQRRGSYRVRPLLNTSPTATLRHPALPDMQLSLRVLDVSIGGVALFLPDDVPPIEPGVQIAQVQVDLDGDTRLQSGLIVHHVTLLHHESRGARLGCEMLNLGGDGERALQRYIDQTQKRRRLLSL</sequence>
<dbReference type="EMBL" id="CP000555">
    <property type="protein sequence ID" value="ABM95816.1"/>
    <property type="molecule type" value="Genomic_DNA"/>
</dbReference>
<dbReference type="SMR" id="A2SJS7"/>
<dbReference type="STRING" id="420662.Mpe_A2862"/>
<dbReference type="KEGG" id="mpt:Mpe_A2862"/>
<dbReference type="eggNOG" id="COG5581">
    <property type="taxonomic scope" value="Bacteria"/>
</dbReference>
<dbReference type="HOGENOM" id="CLU_086025_0_0_4"/>
<dbReference type="Proteomes" id="UP000000366">
    <property type="component" value="Chromosome"/>
</dbReference>
<dbReference type="GO" id="GO:0009425">
    <property type="term" value="C:bacterial-type flagellum basal body"/>
    <property type="evidence" value="ECO:0007669"/>
    <property type="project" value="UniProtKB-SubCell"/>
</dbReference>
<dbReference type="GO" id="GO:0035438">
    <property type="term" value="F:cyclic-di-GMP binding"/>
    <property type="evidence" value="ECO:0007669"/>
    <property type="project" value="UniProtKB-UniRule"/>
</dbReference>
<dbReference type="GO" id="GO:0071973">
    <property type="term" value="P:bacterial-type flagellum-dependent cell motility"/>
    <property type="evidence" value="ECO:0007669"/>
    <property type="project" value="UniProtKB-UniRule"/>
</dbReference>
<dbReference type="GO" id="GO:0071945">
    <property type="term" value="P:regulation of bacterial-type flagellum-dependent cell motility by regulation of motor speed"/>
    <property type="evidence" value="ECO:0007669"/>
    <property type="project" value="UniProtKB-UniRule"/>
</dbReference>
<dbReference type="Gene3D" id="2.30.110.10">
    <property type="entry name" value="Electron Transport, Fmn-binding Protein, Chain A"/>
    <property type="match status" value="1"/>
</dbReference>
<dbReference type="Gene3D" id="2.40.10.220">
    <property type="entry name" value="predicted glycosyltransferase like domains"/>
    <property type="match status" value="1"/>
</dbReference>
<dbReference type="HAMAP" id="MF_01457">
    <property type="entry name" value="YcgR"/>
    <property type="match status" value="1"/>
</dbReference>
<dbReference type="InterPro" id="IPR009875">
    <property type="entry name" value="PilZ_domain"/>
</dbReference>
<dbReference type="InterPro" id="IPR012349">
    <property type="entry name" value="Split_barrel_FMN-bd"/>
</dbReference>
<dbReference type="InterPro" id="IPR023787">
    <property type="entry name" value="T3SS_YcgR"/>
</dbReference>
<dbReference type="InterPro" id="IPR009926">
    <property type="entry name" value="T3SS_YcgR_PilZN"/>
</dbReference>
<dbReference type="Pfam" id="PF07238">
    <property type="entry name" value="PilZ"/>
    <property type="match status" value="1"/>
</dbReference>
<dbReference type="Pfam" id="PF07317">
    <property type="entry name" value="PilZN"/>
    <property type="match status" value="1"/>
</dbReference>
<dbReference type="SUPFAM" id="SSF141371">
    <property type="entry name" value="PilZ domain-like"/>
    <property type="match status" value="1"/>
</dbReference>